<feature type="chain" id="PRO_0000273525" description="Histone H1.2, embryonic">
    <location>
        <begin position="1" status="less than"/>
        <end position="62" status="greater than"/>
    </location>
</feature>
<feature type="domain" description="H15" evidence="1">
    <location>
        <begin position="1"/>
        <end position="53"/>
    </location>
</feature>
<feature type="sequence variant" evidence="2">
    <original>T</original>
    <variation>G</variation>
    <location>
        <position position="7"/>
    </location>
</feature>
<feature type="non-consecutive residues" evidence="3">
    <location>
        <begin position="16"/>
        <end position="17"/>
    </location>
</feature>
<feature type="non-terminal residue" evidence="3">
    <location>
        <position position="1"/>
    </location>
</feature>
<feature type="non-terminal residue" evidence="3">
    <location>
        <position position="62"/>
    </location>
</feature>
<proteinExistence type="evidence at protein level"/>
<dbReference type="SMR" id="Q99282"/>
<dbReference type="GO" id="GO:0000786">
    <property type="term" value="C:nucleosome"/>
    <property type="evidence" value="ECO:0007669"/>
    <property type="project" value="InterPro"/>
</dbReference>
<dbReference type="GO" id="GO:0005634">
    <property type="term" value="C:nucleus"/>
    <property type="evidence" value="ECO:0007669"/>
    <property type="project" value="UniProtKB-SubCell"/>
</dbReference>
<dbReference type="GO" id="GO:0003677">
    <property type="term" value="F:DNA binding"/>
    <property type="evidence" value="ECO:0007669"/>
    <property type="project" value="UniProtKB-KW"/>
</dbReference>
<dbReference type="GO" id="GO:0006334">
    <property type="term" value="P:nucleosome assembly"/>
    <property type="evidence" value="ECO:0007669"/>
    <property type="project" value="InterPro"/>
</dbReference>
<dbReference type="CDD" id="cd00073">
    <property type="entry name" value="H15"/>
    <property type="match status" value="1"/>
</dbReference>
<dbReference type="Gene3D" id="1.10.10.10">
    <property type="entry name" value="Winged helix-like DNA-binding domain superfamily/Winged helix DNA-binding domain"/>
    <property type="match status" value="1"/>
</dbReference>
<dbReference type="InterPro" id="IPR005818">
    <property type="entry name" value="Histone_H1/H5_H15"/>
</dbReference>
<dbReference type="InterPro" id="IPR036388">
    <property type="entry name" value="WH-like_DNA-bd_sf"/>
</dbReference>
<dbReference type="InterPro" id="IPR036390">
    <property type="entry name" value="WH_DNA-bd_sf"/>
</dbReference>
<dbReference type="Pfam" id="PF00538">
    <property type="entry name" value="Linker_histone"/>
    <property type="match status" value="1"/>
</dbReference>
<dbReference type="SMART" id="SM00526">
    <property type="entry name" value="H15"/>
    <property type="match status" value="1"/>
</dbReference>
<dbReference type="SUPFAM" id="SSF46785">
    <property type="entry name" value="Winged helix' DNA-binding domain"/>
    <property type="match status" value="1"/>
</dbReference>
<dbReference type="PROSITE" id="PS51504">
    <property type="entry name" value="H15"/>
    <property type="match status" value="1"/>
</dbReference>
<accession>Q99282</accession>
<evidence type="ECO:0000255" key="1">
    <source>
        <dbReference type="PROSITE-ProRule" id="PRU00837"/>
    </source>
</evidence>
<evidence type="ECO:0000269" key="2">
    <source>
    </source>
</evidence>
<evidence type="ECO:0000303" key="3">
    <source>
    </source>
</evidence>
<evidence type="ECO:0000305" key="4"/>
<comment type="function">
    <text>Histones H1 are necessary for the condensation of nucleosome chains into higher-order structures.</text>
</comment>
<comment type="subcellular location">
    <subcellularLocation>
        <location evidence="4">Nucleus</location>
    </subcellularLocation>
    <subcellularLocation>
        <location>Chromosome</location>
    </subcellularLocation>
</comment>
<comment type="similarity">
    <text evidence="1">Belongs to the histone H1/H5 family.</text>
</comment>
<protein>
    <recommendedName>
        <fullName>Histone H1.2, embryonic</fullName>
    </recommendedName>
</protein>
<keyword id="KW-0158">Chromosome</keyword>
<keyword id="KW-0903">Direct protein sequencing</keyword>
<keyword id="KW-0238">DNA-binding</keyword>
<keyword id="KW-0539">Nucleus</keyword>
<sequence>HVVAAITALKERGGSSMKKQSVFIKKALKSGVEKGTLVQVKGKGASGSFKLGKKPAAGRTDA</sequence>
<reference evidence="4" key="1">
    <citation type="journal article" date="1983" name="Biochim. Biophys. Acta">
        <title>The identification by sequence homology of stage-specific sea urchin embryo histones H1.</title>
        <authorList>
            <person name="de Groot P."/>
            <person name="Strickland W.N."/>
            <person name="Brandt W.F."/>
            <person name="von Holt C."/>
        </authorList>
    </citation>
    <scope>PROTEIN SEQUENCE</scope>
    <scope>VARIANT GLY-7</scope>
    <source>
        <tissue evidence="2">Embryo</tissue>
    </source>
</reference>
<name>H12E_PARAN</name>
<organism>
    <name type="scientific">Parechinus angulosus</name>
    <name type="common">Angulate sea urchin</name>
    <name type="synonym">Cidaris angulosus</name>
    <dbReference type="NCBI Taxonomy" id="7658"/>
    <lineage>
        <taxon>Eukaryota</taxon>
        <taxon>Metazoa</taxon>
        <taxon>Echinodermata</taxon>
        <taxon>Eleutherozoa</taxon>
        <taxon>Echinozoa</taxon>
        <taxon>Echinoidea</taxon>
        <taxon>Euechinoidea</taxon>
        <taxon>Echinacea</taxon>
        <taxon>Camarodonta</taxon>
        <taxon>Echinidea</taxon>
        <taxon>Echinidae</taxon>
        <taxon>Parechinus</taxon>
    </lineage>
</organism>